<accession>Q2IJL8</accession>
<sequence length="183" mass="19499">MSQARFIAFSDGSALVNPGGPGGTGYVVLDRARPAYRFGGTRWVEDGPNAVTNNRMELRAVLEALEGLPGGEAVQVISDSRYVVDALSRWIHGWRRKGWRTASGEPVLNRDLIEALDARARDLSVTYTWVRGHDGHAVNEVVDQLAQAAARGVAGPGEAEVVAALRAEAFLAGGPPAPRSSRA</sequence>
<gene>
    <name evidence="1" type="primary">rnhA</name>
    <name type="ordered locus">Adeh_2077</name>
</gene>
<comment type="function">
    <text evidence="1">Endonuclease that specifically degrades the RNA of RNA-DNA hybrids.</text>
</comment>
<comment type="catalytic activity">
    <reaction evidence="1">
        <text>Endonucleolytic cleavage to 5'-phosphomonoester.</text>
        <dbReference type="EC" id="3.1.26.4"/>
    </reaction>
</comment>
<comment type="cofactor">
    <cofactor evidence="1">
        <name>Mg(2+)</name>
        <dbReference type="ChEBI" id="CHEBI:18420"/>
    </cofactor>
    <text evidence="1">Binds 1 Mg(2+) ion per subunit. May bind a second metal ion at a regulatory site, or after substrate binding.</text>
</comment>
<comment type="subunit">
    <text evidence="1">Monomer.</text>
</comment>
<comment type="subcellular location">
    <subcellularLocation>
        <location evidence="1">Cytoplasm</location>
    </subcellularLocation>
</comment>
<comment type="similarity">
    <text evidence="1">Belongs to the RNase H family.</text>
</comment>
<dbReference type="EC" id="3.1.26.4" evidence="1"/>
<dbReference type="EMBL" id="CP000251">
    <property type="protein sequence ID" value="ABC81847.1"/>
    <property type="molecule type" value="Genomic_DNA"/>
</dbReference>
<dbReference type="RefSeq" id="WP_011421129.1">
    <property type="nucleotide sequence ID" value="NC_007760.1"/>
</dbReference>
<dbReference type="SMR" id="Q2IJL8"/>
<dbReference type="STRING" id="290397.Adeh_2077"/>
<dbReference type="KEGG" id="ade:Adeh_2077"/>
<dbReference type="eggNOG" id="COG0328">
    <property type="taxonomic scope" value="Bacteria"/>
</dbReference>
<dbReference type="HOGENOM" id="CLU_030894_6_1_7"/>
<dbReference type="OrthoDB" id="7845843at2"/>
<dbReference type="Proteomes" id="UP000001935">
    <property type="component" value="Chromosome"/>
</dbReference>
<dbReference type="GO" id="GO:0005737">
    <property type="term" value="C:cytoplasm"/>
    <property type="evidence" value="ECO:0007669"/>
    <property type="project" value="UniProtKB-SubCell"/>
</dbReference>
<dbReference type="GO" id="GO:0000287">
    <property type="term" value="F:magnesium ion binding"/>
    <property type="evidence" value="ECO:0007669"/>
    <property type="project" value="UniProtKB-UniRule"/>
</dbReference>
<dbReference type="GO" id="GO:0003676">
    <property type="term" value="F:nucleic acid binding"/>
    <property type="evidence" value="ECO:0007669"/>
    <property type="project" value="InterPro"/>
</dbReference>
<dbReference type="GO" id="GO:0004523">
    <property type="term" value="F:RNA-DNA hybrid ribonuclease activity"/>
    <property type="evidence" value="ECO:0007669"/>
    <property type="project" value="UniProtKB-UniRule"/>
</dbReference>
<dbReference type="GO" id="GO:0043137">
    <property type="term" value="P:DNA replication, removal of RNA primer"/>
    <property type="evidence" value="ECO:0007669"/>
    <property type="project" value="TreeGrafter"/>
</dbReference>
<dbReference type="CDD" id="cd09278">
    <property type="entry name" value="RNase_HI_prokaryote_like"/>
    <property type="match status" value="1"/>
</dbReference>
<dbReference type="Gene3D" id="3.30.420.10">
    <property type="entry name" value="Ribonuclease H-like superfamily/Ribonuclease H"/>
    <property type="match status" value="1"/>
</dbReference>
<dbReference type="HAMAP" id="MF_00042">
    <property type="entry name" value="RNase_H"/>
    <property type="match status" value="1"/>
</dbReference>
<dbReference type="InterPro" id="IPR050092">
    <property type="entry name" value="RNase_H"/>
</dbReference>
<dbReference type="InterPro" id="IPR012337">
    <property type="entry name" value="RNaseH-like_sf"/>
</dbReference>
<dbReference type="InterPro" id="IPR002156">
    <property type="entry name" value="RNaseH_domain"/>
</dbReference>
<dbReference type="InterPro" id="IPR036397">
    <property type="entry name" value="RNaseH_sf"/>
</dbReference>
<dbReference type="InterPro" id="IPR022892">
    <property type="entry name" value="RNaseHI"/>
</dbReference>
<dbReference type="PANTHER" id="PTHR10642">
    <property type="entry name" value="RIBONUCLEASE H1"/>
    <property type="match status" value="1"/>
</dbReference>
<dbReference type="PANTHER" id="PTHR10642:SF26">
    <property type="entry name" value="RIBONUCLEASE H1"/>
    <property type="match status" value="1"/>
</dbReference>
<dbReference type="Pfam" id="PF00075">
    <property type="entry name" value="RNase_H"/>
    <property type="match status" value="1"/>
</dbReference>
<dbReference type="SUPFAM" id="SSF53098">
    <property type="entry name" value="Ribonuclease H-like"/>
    <property type="match status" value="1"/>
</dbReference>
<dbReference type="PROSITE" id="PS50879">
    <property type="entry name" value="RNASE_H_1"/>
    <property type="match status" value="1"/>
</dbReference>
<name>RNH_ANADE</name>
<organism>
    <name type="scientific">Anaeromyxobacter dehalogenans (strain 2CP-C)</name>
    <dbReference type="NCBI Taxonomy" id="290397"/>
    <lineage>
        <taxon>Bacteria</taxon>
        <taxon>Pseudomonadati</taxon>
        <taxon>Myxococcota</taxon>
        <taxon>Myxococcia</taxon>
        <taxon>Myxococcales</taxon>
        <taxon>Cystobacterineae</taxon>
        <taxon>Anaeromyxobacteraceae</taxon>
        <taxon>Anaeromyxobacter</taxon>
    </lineage>
</organism>
<evidence type="ECO:0000255" key="1">
    <source>
        <dbReference type="HAMAP-Rule" id="MF_00042"/>
    </source>
</evidence>
<evidence type="ECO:0000255" key="2">
    <source>
        <dbReference type="PROSITE-ProRule" id="PRU00408"/>
    </source>
</evidence>
<feature type="chain" id="PRO_0000332557" description="Ribonuclease H">
    <location>
        <begin position="1"/>
        <end position="183"/>
    </location>
</feature>
<feature type="domain" description="RNase H type-1" evidence="2">
    <location>
        <begin position="2"/>
        <end position="151"/>
    </location>
</feature>
<feature type="binding site" evidence="1">
    <location>
        <position position="11"/>
    </location>
    <ligand>
        <name>Mg(2+)</name>
        <dbReference type="ChEBI" id="CHEBI:18420"/>
        <label>1</label>
    </ligand>
</feature>
<feature type="binding site" evidence="1">
    <location>
        <position position="11"/>
    </location>
    <ligand>
        <name>Mg(2+)</name>
        <dbReference type="ChEBI" id="CHEBI:18420"/>
        <label>2</label>
    </ligand>
</feature>
<feature type="binding site" evidence="1">
    <location>
        <position position="57"/>
    </location>
    <ligand>
        <name>Mg(2+)</name>
        <dbReference type="ChEBI" id="CHEBI:18420"/>
        <label>1</label>
    </ligand>
</feature>
<feature type="binding site" evidence="1">
    <location>
        <position position="79"/>
    </location>
    <ligand>
        <name>Mg(2+)</name>
        <dbReference type="ChEBI" id="CHEBI:18420"/>
        <label>1</label>
    </ligand>
</feature>
<feature type="binding site" evidence="1">
    <location>
        <position position="143"/>
    </location>
    <ligand>
        <name>Mg(2+)</name>
        <dbReference type="ChEBI" id="CHEBI:18420"/>
        <label>2</label>
    </ligand>
</feature>
<protein>
    <recommendedName>
        <fullName evidence="1">Ribonuclease H</fullName>
        <shortName evidence="1">RNase H</shortName>
        <ecNumber evidence="1">3.1.26.4</ecNumber>
    </recommendedName>
</protein>
<reference key="1">
    <citation type="submission" date="2006-01" db="EMBL/GenBank/DDBJ databases">
        <title>Complete sequence of Anaeromyxobacter dehalogenans 2CP-C.</title>
        <authorList>
            <person name="Copeland A."/>
            <person name="Lucas S."/>
            <person name="Lapidus A."/>
            <person name="Barry K."/>
            <person name="Detter J.C."/>
            <person name="Glavina T."/>
            <person name="Hammon N."/>
            <person name="Israni S."/>
            <person name="Pitluck S."/>
            <person name="Brettin T."/>
            <person name="Bruce D."/>
            <person name="Han C."/>
            <person name="Tapia R."/>
            <person name="Gilna P."/>
            <person name="Kiss H."/>
            <person name="Schmutz J."/>
            <person name="Larimer F."/>
            <person name="Land M."/>
            <person name="Kyrpides N."/>
            <person name="Anderson I."/>
            <person name="Sanford R.A."/>
            <person name="Ritalahti K.M."/>
            <person name="Thomas H.S."/>
            <person name="Kirby J.R."/>
            <person name="Zhulin I.B."/>
            <person name="Loeffler F.E."/>
            <person name="Richardson P."/>
        </authorList>
    </citation>
    <scope>NUCLEOTIDE SEQUENCE [LARGE SCALE GENOMIC DNA]</scope>
    <source>
        <strain>2CP-C</strain>
    </source>
</reference>
<keyword id="KW-0963">Cytoplasm</keyword>
<keyword id="KW-0255">Endonuclease</keyword>
<keyword id="KW-0378">Hydrolase</keyword>
<keyword id="KW-0460">Magnesium</keyword>
<keyword id="KW-0479">Metal-binding</keyword>
<keyword id="KW-0540">Nuclease</keyword>
<keyword id="KW-1185">Reference proteome</keyword>
<proteinExistence type="inferred from homology"/>